<comment type="alternative products">
    <event type="alternative splicing"/>
    <isoform>
        <id>Q5T0U0-1</id>
        <name>1</name>
        <sequence type="displayed"/>
    </isoform>
    <isoform>
        <id>Q5T0U0-2</id>
        <name>2</name>
        <sequence type="described" ref="VSP_025114"/>
    </isoform>
</comment>
<organism>
    <name type="scientific">Homo sapiens</name>
    <name type="common">Human</name>
    <dbReference type="NCBI Taxonomy" id="9606"/>
    <lineage>
        <taxon>Eukaryota</taxon>
        <taxon>Metazoa</taxon>
        <taxon>Chordata</taxon>
        <taxon>Craniata</taxon>
        <taxon>Vertebrata</taxon>
        <taxon>Euteleostomi</taxon>
        <taxon>Mammalia</taxon>
        <taxon>Eutheria</taxon>
        <taxon>Euarchontoglires</taxon>
        <taxon>Primates</taxon>
        <taxon>Haplorrhini</taxon>
        <taxon>Catarrhini</taxon>
        <taxon>Hominidae</taxon>
        <taxon>Homo</taxon>
    </lineage>
</organism>
<proteinExistence type="evidence at protein level"/>
<keyword id="KW-0025">Alternative splicing</keyword>
<keyword id="KW-0175">Coiled coil</keyword>
<keyword id="KW-1267">Proteomics identification</keyword>
<keyword id="KW-1185">Reference proteome</keyword>
<accession>Q5T0U0</accession>
<accession>B2RP70</accession>
<accession>B7ZMI9</accession>
<accession>Q96MV0</accession>
<sequence>MSDNKERKSQGFPKEDNQDTSSLADAVEKVAKQQQSQASEIEKNKKVLFNLKNELHELEKEIAAISAETKETERQIYQQDSAIENTKLHCDSLETQIKSLHSENVKLKFDIETAQEDFEEHMIKYNAYYAKIKAHKNSLGEVESKWSFMTELHEKRDFVKKLKTMKEELMQDLQNPGGNRITQVQEDITNLKDKIITVKESIIEKTCFLEEEKKTHEKLRKEIEVQHKRYDAILKRLHCQVNKLQSNRRQWQWNIQQLEKTAAELRKCIGMQE</sequence>
<evidence type="ECO:0000255" key="1"/>
<evidence type="ECO:0000256" key="2">
    <source>
        <dbReference type="SAM" id="MobiDB-lite"/>
    </source>
</evidence>
<evidence type="ECO:0000303" key="3">
    <source>
    </source>
</evidence>
<evidence type="ECO:0000303" key="4">
    <source>
    </source>
</evidence>
<dbReference type="EMBL" id="AK056408">
    <property type="protein sequence ID" value="BAB71178.1"/>
    <property type="molecule type" value="mRNA"/>
</dbReference>
<dbReference type="EMBL" id="AL512506">
    <property type="status" value="NOT_ANNOTATED_CDS"/>
    <property type="molecule type" value="Genomic_DNA"/>
</dbReference>
<dbReference type="EMBL" id="BC137289">
    <property type="protein sequence ID" value="AAI37290.1"/>
    <property type="molecule type" value="mRNA"/>
</dbReference>
<dbReference type="EMBL" id="BC137290">
    <property type="protein sequence ID" value="AAI37291.1"/>
    <property type="molecule type" value="mRNA"/>
</dbReference>
<dbReference type="EMBL" id="BC144570">
    <property type="protein sequence ID" value="AAI44571.1"/>
    <property type="molecule type" value="mRNA"/>
</dbReference>
<dbReference type="CCDS" id="CCDS9390.2">
    <molecule id="Q5T0U0-1"/>
</dbReference>
<dbReference type="RefSeq" id="NP_659411.2">
    <molecule id="Q5T0U0-1"/>
    <property type="nucleotide sequence ID" value="NM_144974.5"/>
</dbReference>
<dbReference type="RefSeq" id="XP_016875886.1">
    <molecule id="Q5T0U0-1"/>
    <property type="nucleotide sequence ID" value="XM_017020397.3"/>
</dbReference>
<dbReference type="RefSeq" id="XP_054230112.1">
    <molecule id="Q5T0U0-1"/>
    <property type="nucleotide sequence ID" value="XM_054374137.1"/>
</dbReference>
<dbReference type="SMR" id="Q5T0U0"/>
<dbReference type="BioGRID" id="127769">
    <property type="interactions" value="9"/>
</dbReference>
<dbReference type="FunCoup" id="Q5T0U0">
    <property type="interactions" value="127"/>
</dbReference>
<dbReference type="IntAct" id="Q5T0U0">
    <property type="interactions" value="9"/>
</dbReference>
<dbReference type="STRING" id="9606.ENSP00000407763"/>
<dbReference type="iPTMnet" id="Q5T0U0"/>
<dbReference type="PhosphoSitePlus" id="Q5T0U0"/>
<dbReference type="BioMuta" id="CCDC122"/>
<dbReference type="DMDM" id="74744358"/>
<dbReference type="jPOST" id="Q5T0U0"/>
<dbReference type="MassIVE" id="Q5T0U0"/>
<dbReference type="PaxDb" id="9606-ENSP00000407763"/>
<dbReference type="PeptideAtlas" id="Q5T0U0"/>
<dbReference type="ProteomicsDB" id="64202">
    <molecule id="Q5T0U0-1"/>
</dbReference>
<dbReference type="ProteomicsDB" id="64203">
    <molecule id="Q5T0U0-2"/>
</dbReference>
<dbReference type="Antibodypedia" id="53003">
    <property type="antibodies" value="67 antibodies from 10 providers"/>
</dbReference>
<dbReference type="DNASU" id="160857"/>
<dbReference type="Ensembl" id="ENST00000444614.8">
    <molecule id="Q5T0U0-1"/>
    <property type="protein sequence ID" value="ENSP00000407763.2"/>
    <property type="gene ID" value="ENSG00000151773.13"/>
</dbReference>
<dbReference type="GeneID" id="160857"/>
<dbReference type="KEGG" id="hsa:160857"/>
<dbReference type="MANE-Select" id="ENST00000444614.8">
    <property type="protein sequence ID" value="ENSP00000407763.2"/>
    <property type="RefSeq nucleotide sequence ID" value="NM_144974.5"/>
    <property type="RefSeq protein sequence ID" value="NP_659411.2"/>
</dbReference>
<dbReference type="UCSC" id="uc010acf.4">
    <molecule id="Q5T0U0-1"/>
    <property type="organism name" value="human"/>
</dbReference>
<dbReference type="AGR" id="HGNC:26478"/>
<dbReference type="CTD" id="160857"/>
<dbReference type="DisGeNET" id="160857"/>
<dbReference type="GeneCards" id="CCDC122"/>
<dbReference type="HGNC" id="HGNC:26478">
    <property type="gene designation" value="CCDC122"/>
</dbReference>
<dbReference type="HPA" id="ENSG00000151773">
    <property type="expression patterns" value="Low tissue specificity"/>
</dbReference>
<dbReference type="MIM" id="613408">
    <property type="type" value="gene"/>
</dbReference>
<dbReference type="neXtProt" id="NX_Q5T0U0"/>
<dbReference type="OpenTargets" id="ENSG00000151773"/>
<dbReference type="PharmGKB" id="PA147358230"/>
<dbReference type="VEuPathDB" id="HostDB:ENSG00000151773"/>
<dbReference type="eggNOG" id="ENOG502RYNY">
    <property type="taxonomic scope" value="Eukaryota"/>
</dbReference>
<dbReference type="GeneTree" id="ENSGT00390000005130"/>
<dbReference type="HOGENOM" id="CLU_085397_1_0_1"/>
<dbReference type="InParanoid" id="Q5T0U0"/>
<dbReference type="OMA" id="FMTELYE"/>
<dbReference type="OrthoDB" id="9881749at2759"/>
<dbReference type="PAN-GO" id="Q5T0U0">
    <property type="GO annotations" value="0 GO annotations based on evolutionary models"/>
</dbReference>
<dbReference type="PhylomeDB" id="Q5T0U0"/>
<dbReference type="TreeFam" id="TF335842"/>
<dbReference type="PathwayCommons" id="Q5T0U0"/>
<dbReference type="SignaLink" id="Q5T0U0"/>
<dbReference type="BioGRID-ORCS" id="160857">
    <property type="hits" value="13 hits in 1144 CRISPR screens"/>
</dbReference>
<dbReference type="ChiTaRS" id="CCDC122">
    <property type="organism name" value="human"/>
</dbReference>
<dbReference type="GenomeRNAi" id="160857"/>
<dbReference type="Pharos" id="Q5T0U0">
    <property type="development level" value="Tdark"/>
</dbReference>
<dbReference type="PRO" id="PR:Q5T0U0"/>
<dbReference type="Proteomes" id="UP000005640">
    <property type="component" value="Chromosome 13"/>
</dbReference>
<dbReference type="RNAct" id="Q5T0U0">
    <property type="molecule type" value="protein"/>
</dbReference>
<dbReference type="Bgee" id="ENSG00000151773">
    <property type="expression patterns" value="Expressed in calcaneal tendon and 97 other cell types or tissues"/>
</dbReference>
<dbReference type="ExpressionAtlas" id="Q5T0U0">
    <property type="expression patterns" value="baseline and differential"/>
</dbReference>
<dbReference type="Gene3D" id="1.10.287.1490">
    <property type="match status" value="1"/>
</dbReference>
<protein>
    <recommendedName>
        <fullName>Coiled-coil domain-containing protein 122</fullName>
    </recommendedName>
</protein>
<reference key="1">
    <citation type="journal article" date="2004" name="Nat. Genet.">
        <title>Complete sequencing and characterization of 21,243 full-length human cDNAs.</title>
        <authorList>
            <person name="Ota T."/>
            <person name="Suzuki Y."/>
            <person name="Nishikawa T."/>
            <person name="Otsuki T."/>
            <person name="Sugiyama T."/>
            <person name="Irie R."/>
            <person name="Wakamatsu A."/>
            <person name="Hayashi K."/>
            <person name="Sato H."/>
            <person name="Nagai K."/>
            <person name="Kimura K."/>
            <person name="Makita H."/>
            <person name="Sekine M."/>
            <person name="Obayashi M."/>
            <person name="Nishi T."/>
            <person name="Shibahara T."/>
            <person name="Tanaka T."/>
            <person name="Ishii S."/>
            <person name="Yamamoto J."/>
            <person name="Saito K."/>
            <person name="Kawai Y."/>
            <person name="Isono Y."/>
            <person name="Nakamura Y."/>
            <person name="Nagahari K."/>
            <person name="Murakami K."/>
            <person name="Yasuda T."/>
            <person name="Iwayanagi T."/>
            <person name="Wagatsuma M."/>
            <person name="Shiratori A."/>
            <person name="Sudo H."/>
            <person name="Hosoiri T."/>
            <person name="Kaku Y."/>
            <person name="Kodaira H."/>
            <person name="Kondo H."/>
            <person name="Sugawara M."/>
            <person name="Takahashi M."/>
            <person name="Kanda K."/>
            <person name="Yokoi T."/>
            <person name="Furuya T."/>
            <person name="Kikkawa E."/>
            <person name="Omura Y."/>
            <person name="Abe K."/>
            <person name="Kamihara K."/>
            <person name="Katsuta N."/>
            <person name="Sato K."/>
            <person name="Tanikawa M."/>
            <person name="Yamazaki M."/>
            <person name="Ninomiya K."/>
            <person name="Ishibashi T."/>
            <person name="Yamashita H."/>
            <person name="Murakawa K."/>
            <person name="Fujimori K."/>
            <person name="Tanai H."/>
            <person name="Kimata M."/>
            <person name="Watanabe M."/>
            <person name="Hiraoka S."/>
            <person name="Chiba Y."/>
            <person name="Ishida S."/>
            <person name="Ono Y."/>
            <person name="Takiguchi S."/>
            <person name="Watanabe S."/>
            <person name="Yosida M."/>
            <person name="Hotuta T."/>
            <person name="Kusano J."/>
            <person name="Kanehori K."/>
            <person name="Takahashi-Fujii A."/>
            <person name="Hara H."/>
            <person name="Tanase T.-O."/>
            <person name="Nomura Y."/>
            <person name="Togiya S."/>
            <person name="Komai F."/>
            <person name="Hara R."/>
            <person name="Takeuchi K."/>
            <person name="Arita M."/>
            <person name="Imose N."/>
            <person name="Musashino K."/>
            <person name="Yuuki H."/>
            <person name="Oshima A."/>
            <person name="Sasaki N."/>
            <person name="Aotsuka S."/>
            <person name="Yoshikawa Y."/>
            <person name="Matsunawa H."/>
            <person name="Ichihara T."/>
            <person name="Shiohata N."/>
            <person name="Sano S."/>
            <person name="Moriya S."/>
            <person name="Momiyama H."/>
            <person name="Satoh N."/>
            <person name="Takami S."/>
            <person name="Terashima Y."/>
            <person name="Suzuki O."/>
            <person name="Nakagawa S."/>
            <person name="Senoh A."/>
            <person name="Mizoguchi H."/>
            <person name="Goto Y."/>
            <person name="Shimizu F."/>
            <person name="Wakebe H."/>
            <person name="Hishigaki H."/>
            <person name="Watanabe T."/>
            <person name="Sugiyama A."/>
            <person name="Takemoto M."/>
            <person name="Kawakami B."/>
            <person name="Yamazaki M."/>
            <person name="Watanabe K."/>
            <person name="Kumagai A."/>
            <person name="Itakura S."/>
            <person name="Fukuzumi Y."/>
            <person name="Fujimori Y."/>
            <person name="Komiyama M."/>
            <person name="Tashiro H."/>
            <person name="Tanigami A."/>
            <person name="Fujiwara T."/>
            <person name="Ono T."/>
            <person name="Yamada K."/>
            <person name="Fujii Y."/>
            <person name="Ozaki K."/>
            <person name="Hirao M."/>
            <person name="Ohmori Y."/>
            <person name="Kawabata A."/>
            <person name="Hikiji T."/>
            <person name="Kobatake N."/>
            <person name="Inagaki H."/>
            <person name="Ikema Y."/>
            <person name="Okamoto S."/>
            <person name="Okitani R."/>
            <person name="Kawakami T."/>
            <person name="Noguchi S."/>
            <person name="Itoh T."/>
            <person name="Shigeta K."/>
            <person name="Senba T."/>
            <person name="Matsumura K."/>
            <person name="Nakajima Y."/>
            <person name="Mizuno T."/>
            <person name="Morinaga M."/>
            <person name="Sasaki M."/>
            <person name="Togashi T."/>
            <person name="Oyama M."/>
            <person name="Hata H."/>
            <person name="Watanabe M."/>
            <person name="Komatsu T."/>
            <person name="Mizushima-Sugano J."/>
            <person name="Satoh T."/>
            <person name="Shirai Y."/>
            <person name="Takahashi Y."/>
            <person name="Nakagawa K."/>
            <person name="Okumura K."/>
            <person name="Nagase T."/>
            <person name="Nomura N."/>
            <person name="Kikuchi H."/>
            <person name="Masuho Y."/>
            <person name="Yamashita R."/>
            <person name="Nakai K."/>
            <person name="Yada T."/>
            <person name="Nakamura Y."/>
            <person name="Ohara O."/>
            <person name="Isogai T."/>
            <person name="Sugano S."/>
        </authorList>
    </citation>
    <scope>NUCLEOTIDE SEQUENCE [LARGE SCALE MRNA] (ISOFORM 2)</scope>
</reference>
<reference key="2">
    <citation type="journal article" date="2004" name="Nature">
        <title>The DNA sequence and analysis of human chromosome 13.</title>
        <authorList>
            <person name="Dunham A."/>
            <person name="Matthews L.H."/>
            <person name="Burton J."/>
            <person name="Ashurst J.L."/>
            <person name="Howe K.L."/>
            <person name="Ashcroft K.J."/>
            <person name="Beare D.M."/>
            <person name="Burford D.C."/>
            <person name="Hunt S.E."/>
            <person name="Griffiths-Jones S."/>
            <person name="Jones M.C."/>
            <person name="Keenan S.J."/>
            <person name="Oliver K."/>
            <person name="Scott C.E."/>
            <person name="Ainscough R."/>
            <person name="Almeida J.P."/>
            <person name="Ambrose K.D."/>
            <person name="Andrews D.T."/>
            <person name="Ashwell R.I.S."/>
            <person name="Babbage A.K."/>
            <person name="Bagguley C.L."/>
            <person name="Bailey J."/>
            <person name="Bannerjee R."/>
            <person name="Barlow K.F."/>
            <person name="Bates K."/>
            <person name="Beasley H."/>
            <person name="Bird C.P."/>
            <person name="Bray-Allen S."/>
            <person name="Brown A.J."/>
            <person name="Brown J.Y."/>
            <person name="Burrill W."/>
            <person name="Carder C."/>
            <person name="Carter N.P."/>
            <person name="Chapman J.C."/>
            <person name="Clamp M.E."/>
            <person name="Clark S.Y."/>
            <person name="Clarke G."/>
            <person name="Clee C.M."/>
            <person name="Clegg S.C."/>
            <person name="Cobley V."/>
            <person name="Collins J.E."/>
            <person name="Corby N."/>
            <person name="Coville G.J."/>
            <person name="Deloukas P."/>
            <person name="Dhami P."/>
            <person name="Dunham I."/>
            <person name="Dunn M."/>
            <person name="Earthrowl M.E."/>
            <person name="Ellington A.G."/>
            <person name="Faulkner L."/>
            <person name="Frankish A.G."/>
            <person name="Frankland J."/>
            <person name="French L."/>
            <person name="Garner P."/>
            <person name="Garnett J."/>
            <person name="Gilbert J.G.R."/>
            <person name="Gilson C.J."/>
            <person name="Ghori J."/>
            <person name="Grafham D.V."/>
            <person name="Gribble S.M."/>
            <person name="Griffiths C."/>
            <person name="Hall R.E."/>
            <person name="Hammond S."/>
            <person name="Harley J.L."/>
            <person name="Hart E.A."/>
            <person name="Heath P.D."/>
            <person name="Howden P.J."/>
            <person name="Huckle E.J."/>
            <person name="Hunt P.J."/>
            <person name="Hunt A.R."/>
            <person name="Johnson C."/>
            <person name="Johnson D."/>
            <person name="Kay M."/>
            <person name="Kimberley A.M."/>
            <person name="King A."/>
            <person name="Laird G.K."/>
            <person name="Langford C.J."/>
            <person name="Lawlor S."/>
            <person name="Leongamornlert D.A."/>
            <person name="Lloyd D.M."/>
            <person name="Lloyd C."/>
            <person name="Loveland J.E."/>
            <person name="Lovell J."/>
            <person name="Martin S."/>
            <person name="Mashreghi-Mohammadi M."/>
            <person name="McLaren S.J."/>
            <person name="McMurray A."/>
            <person name="Milne S."/>
            <person name="Moore M.J.F."/>
            <person name="Nickerson T."/>
            <person name="Palmer S.A."/>
            <person name="Pearce A.V."/>
            <person name="Peck A.I."/>
            <person name="Pelan S."/>
            <person name="Phillimore B."/>
            <person name="Porter K.M."/>
            <person name="Rice C.M."/>
            <person name="Searle S."/>
            <person name="Sehra H.K."/>
            <person name="Shownkeen R."/>
            <person name="Skuce C.D."/>
            <person name="Smith M."/>
            <person name="Steward C.A."/>
            <person name="Sycamore N."/>
            <person name="Tester J."/>
            <person name="Thomas D.W."/>
            <person name="Tracey A."/>
            <person name="Tromans A."/>
            <person name="Tubby B."/>
            <person name="Wall M."/>
            <person name="Wallis J.M."/>
            <person name="West A.P."/>
            <person name="Whitehead S.L."/>
            <person name="Willey D.L."/>
            <person name="Wilming L."/>
            <person name="Wray P.W."/>
            <person name="Wright M.W."/>
            <person name="Young L."/>
            <person name="Coulson A."/>
            <person name="Durbin R.M."/>
            <person name="Hubbard T."/>
            <person name="Sulston J.E."/>
            <person name="Beck S."/>
            <person name="Bentley D.R."/>
            <person name="Rogers J."/>
            <person name="Ross M.T."/>
        </authorList>
    </citation>
    <scope>NUCLEOTIDE SEQUENCE [LARGE SCALE GENOMIC DNA]</scope>
</reference>
<reference key="3">
    <citation type="journal article" date="2004" name="Genome Res.">
        <title>The status, quality, and expansion of the NIH full-length cDNA project: the Mammalian Gene Collection (MGC).</title>
        <authorList>
            <consortium name="The MGC Project Team"/>
        </authorList>
    </citation>
    <scope>NUCLEOTIDE SEQUENCE [LARGE SCALE MRNA] (ISOFORM 2)</scope>
</reference>
<name>CC122_HUMAN</name>
<feature type="chain" id="PRO_0000286598" description="Coiled-coil domain-containing protein 122">
    <location>
        <begin position="1"/>
        <end position="273"/>
    </location>
</feature>
<feature type="region of interest" description="Disordered" evidence="2">
    <location>
        <begin position="1"/>
        <end position="39"/>
    </location>
</feature>
<feature type="coiled-coil region" evidence="1">
    <location>
        <begin position="24"/>
        <end position="116"/>
    </location>
</feature>
<feature type="coiled-coil region" evidence="1">
    <location>
        <begin position="179"/>
        <end position="269"/>
    </location>
</feature>
<feature type="compositionally biased region" description="Basic and acidic residues" evidence="2">
    <location>
        <begin position="1"/>
        <end position="17"/>
    </location>
</feature>
<feature type="splice variant" id="VSP_025114" description="In isoform 2." evidence="3 4">
    <original>VQHKRYDAILKRLHCQVNKLQSNRRQWQWNIQQLEKTAAELRKCIGMQE</original>
    <variation>GLAPSPRLECSSAISAHCKLCLPGSRHSPASASGVAGTTGACHHTQLIFCIFSRDGVSPC</variation>
    <location>
        <begin position="225"/>
        <end position="273"/>
    </location>
</feature>
<feature type="sequence variant" id="VAR_061579" description="In dbSNP:rs9567280.">
    <original>I</original>
    <variation>T</variation>
    <location>
        <position position="269"/>
    </location>
</feature>
<gene>
    <name type="primary">CCDC122</name>
</gene>